<feature type="chain" id="PRO_0000279597" description="RNA-directed RNA polymerase catalytic subunit">
    <location>
        <begin position="1"/>
        <end position="757"/>
    </location>
</feature>
<feature type="domain" description="RdRp catalytic" evidence="1">
    <location>
        <begin position="286"/>
        <end position="483"/>
    </location>
</feature>
<feature type="region of interest" description="Disordered" evidence="2">
    <location>
        <begin position="50"/>
        <end position="82"/>
    </location>
</feature>
<feature type="region of interest" description="Promoter-binding site" evidence="1">
    <location>
        <begin position="249"/>
        <end position="256"/>
    </location>
</feature>
<feature type="short sequence motif" description="Nuclear localization signal" evidence="1">
    <location>
        <begin position="187"/>
        <end position="195"/>
    </location>
</feature>
<feature type="short sequence motif" description="Nuclear localization signal" evidence="1">
    <location>
        <begin position="203"/>
        <end position="216"/>
    </location>
</feature>
<feature type="compositionally biased region" description="Polar residues" evidence="2">
    <location>
        <begin position="55"/>
        <end position="64"/>
    </location>
</feature>
<proteinExistence type="inferred from homology"/>
<accession>Q20PL6</accession>
<gene>
    <name evidence="1" type="primary">PB1</name>
</gene>
<keyword id="KW-1262">Eukaryotic host gene expression shutoff by virus</keyword>
<keyword id="KW-1191">Eukaryotic host transcription shutoff by virus</keyword>
<keyword id="KW-1035">Host cytoplasm</keyword>
<keyword id="KW-1190">Host gene expression shutoff by virus</keyword>
<keyword id="KW-1048">Host nucleus</keyword>
<keyword id="KW-0945">Host-virus interaction</keyword>
<keyword id="KW-1104">Inhibition of host RNA polymerase II by virus</keyword>
<keyword id="KW-0547">Nucleotide-binding</keyword>
<keyword id="KW-0548">Nucleotidyltransferase</keyword>
<keyword id="KW-0597">Phosphoprotein</keyword>
<keyword id="KW-0696">RNA-directed RNA polymerase</keyword>
<keyword id="KW-0808">Transferase</keyword>
<keyword id="KW-0693">Viral RNA replication</keyword>
<keyword id="KW-1195">Viral transcription</keyword>
<protein>
    <recommendedName>
        <fullName evidence="1">RNA-directed RNA polymerase catalytic subunit</fullName>
        <ecNumber evidence="1">2.7.7.48</ecNumber>
    </recommendedName>
    <alternativeName>
        <fullName evidence="1">Polymerase basic protein 1</fullName>
        <shortName evidence="1">PB1</shortName>
    </alternativeName>
    <alternativeName>
        <fullName evidence="1">RNA-directed RNA polymerase subunit P1</fullName>
    </alternativeName>
</protein>
<organism>
    <name type="scientific">Influenza A virus (strain A/Grey teal/Australia/2/1979 H4N4)</name>
    <dbReference type="NCBI Taxonomy" id="402464"/>
    <lineage>
        <taxon>Viruses</taxon>
        <taxon>Riboviria</taxon>
        <taxon>Orthornavirae</taxon>
        <taxon>Negarnaviricota</taxon>
        <taxon>Polyploviricotina</taxon>
        <taxon>Insthoviricetes</taxon>
        <taxon>Articulavirales</taxon>
        <taxon>Orthomyxoviridae</taxon>
        <taxon>Alphainfluenzavirus</taxon>
        <taxon>Alphainfluenzavirus influenzae</taxon>
        <taxon>Influenza A virus</taxon>
    </lineage>
</organism>
<dbReference type="EC" id="2.7.7.48" evidence="1"/>
<dbReference type="EMBL" id="CY005677">
    <property type="protein sequence ID" value="ABB20369.1"/>
    <property type="molecule type" value="Genomic_RNA"/>
</dbReference>
<dbReference type="SMR" id="Q20PL6"/>
<dbReference type="Proteomes" id="UP000008575">
    <property type="component" value="Genome"/>
</dbReference>
<dbReference type="GO" id="GO:0030430">
    <property type="term" value="C:host cell cytoplasm"/>
    <property type="evidence" value="ECO:0007669"/>
    <property type="project" value="UniProtKB-SubCell"/>
</dbReference>
<dbReference type="GO" id="GO:0042025">
    <property type="term" value="C:host cell nucleus"/>
    <property type="evidence" value="ECO:0007669"/>
    <property type="project" value="UniProtKB-SubCell"/>
</dbReference>
<dbReference type="GO" id="GO:0000166">
    <property type="term" value="F:nucleotide binding"/>
    <property type="evidence" value="ECO:0007669"/>
    <property type="project" value="UniProtKB-UniRule"/>
</dbReference>
<dbReference type="GO" id="GO:0003723">
    <property type="term" value="F:RNA binding"/>
    <property type="evidence" value="ECO:0007669"/>
    <property type="project" value="InterPro"/>
</dbReference>
<dbReference type="GO" id="GO:0003968">
    <property type="term" value="F:RNA-directed RNA polymerase activity"/>
    <property type="evidence" value="ECO:0007669"/>
    <property type="project" value="UniProtKB-UniRule"/>
</dbReference>
<dbReference type="GO" id="GO:0006351">
    <property type="term" value="P:DNA-templated transcription"/>
    <property type="evidence" value="ECO:0007669"/>
    <property type="project" value="UniProtKB-UniRule"/>
</dbReference>
<dbReference type="GO" id="GO:0039657">
    <property type="term" value="P:symbiont-mediated suppression of host gene expression"/>
    <property type="evidence" value="ECO:0007669"/>
    <property type="project" value="UniProtKB-KW"/>
</dbReference>
<dbReference type="GO" id="GO:0039523">
    <property type="term" value="P:symbiont-mediated suppression of host mRNA transcription via inhibition of RNA polymerase II activity"/>
    <property type="evidence" value="ECO:0007669"/>
    <property type="project" value="UniProtKB-UniRule"/>
</dbReference>
<dbReference type="GO" id="GO:0039694">
    <property type="term" value="P:viral RNA genome replication"/>
    <property type="evidence" value="ECO:0007669"/>
    <property type="project" value="UniProtKB-UniRule"/>
</dbReference>
<dbReference type="GO" id="GO:0019083">
    <property type="term" value="P:viral transcription"/>
    <property type="evidence" value="ECO:0007669"/>
    <property type="project" value="UniProtKB-KW"/>
</dbReference>
<dbReference type="Gene3D" id="6.10.140.720">
    <property type="match status" value="1"/>
</dbReference>
<dbReference type="HAMAP" id="MF_04065">
    <property type="entry name" value="INFV_RDRP"/>
    <property type="match status" value="1"/>
</dbReference>
<dbReference type="InterPro" id="IPR007099">
    <property type="entry name" value="RNA-dir_pol_NSvirus"/>
</dbReference>
<dbReference type="InterPro" id="IPR001407">
    <property type="entry name" value="RNA_pol_PB1_influenza"/>
</dbReference>
<dbReference type="Pfam" id="PF00602">
    <property type="entry name" value="Flu_PB1"/>
    <property type="match status" value="1"/>
</dbReference>
<dbReference type="PIRSF" id="PIRSF000827">
    <property type="entry name" value="RdRPol_OMV"/>
    <property type="match status" value="1"/>
</dbReference>
<dbReference type="PROSITE" id="PS50525">
    <property type="entry name" value="RDRP_SSRNA_NEG_SEG"/>
    <property type="match status" value="1"/>
</dbReference>
<organismHost>
    <name type="scientific">Aves</name>
    <dbReference type="NCBI Taxonomy" id="8782"/>
</organismHost>
<reference key="1">
    <citation type="journal article" date="2006" name="Science">
        <title>Large-scale sequence analysis of avian influenza isolates.</title>
        <authorList>
            <person name="Obenauer J.C."/>
            <person name="Denson J."/>
            <person name="Mehta P.K."/>
            <person name="Su X."/>
            <person name="Mukatira S."/>
            <person name="Finkelstein D.B."/>
            <person name="Xu X."/>
            <person name="Wang J."/>
            <person name="Ma J."/>
            <person name="Fan Y."/>
            <person name="Rakestraw K.M."/>
            <person name="Webster R.G."/>
            <person name="Hoffmann E."/>
            <person name="Krauss S."/>
            <person name="Zheng J."/>
            <person name="Zhang Z."/>
            <person name="Naeve C.W."/>
        </authorList>
    </citation>
    <scope>NUCLEOTIDE SEQUENCE [GENOMIC RNA]</scope>
</reference>
<evidence type="ECO:0000255" key="1">
    <source>
        <dbReference type="HAMAP-Rule" id="MF_04065"/>
    </source>
</evidence>
<evidence type="ECO:0000256" key="2">
    <source>
        <dbReference type="SAM" id="MobiDB-lite"/>
    </source>
</evidence>
<sequence>MDVNPTLLFLKVPAQNAISTTFPYTGDPPYSHGTGTGYTMDTVNRTHQYSEKGKWTTNTETGAPQLNPIDGPLPEDNEPSGYAQTDCVLEAMAFLEESHPGIFENSCLETMEIVQQTRVDKLTQGRQTYDWTLNRNQPAATALANTIEVFRSNGLTANESGRLIDFLKDVVESMDKKEMEITTHFQRKRRVRDNMTKKMVTQRTIGKKKQRLNKKSYLIRALTLNTMTKDAERGKLKRRAIATPGMQIRGFVYFVETLARSICEKLEQSGLPVGGNEKKAKLANVVRKMMTNSQDTELSFTITGDNTKWNENQNPRMFLAMITYITRNQPEWFRNVLSIAPIMFSNKMARLGKGYMFESKSMKLRTQIPAEMLASIDLKYFNESTRKKIEKIRPLLIDGTASLSPGMMMGMFNMLSTVLGVSILNLGQKRYTKTTYWWDGLQSSDDFALIVNAPNHEGIQAGVDRFYRTCKLVGINMSKKKSYINRTGTFEFTSFFYRYGFVANFSMELPSFGVSGINESADMSIGVTVIKNNMINNDLGPATAQMALQLFIKDYRYTYRCHRGDTQIQTRRSFELKKLWEQTRSKAGLLVSDGGPNLYNIRNLHIPEVCLKWELMDEDYQGRLCNPLNPFVSHKEIESVNNAVVMPAHGPAKSMEYDAVATTHSWIPKRNRSILNTSQRGILEDEQMYQKCCNLFEKFFPSSSYRRPVGISSMVEAMVSRARIDARIDFESGRIKKEEFAEIMKICSTIEELRRQK</sequence>
<name>RDRP_I79A7</name>
<comment type="function">
    <text evidence="1">RNA-dependent RNA polymerase which is responsible for replication and transcription of virus RNA segments. The transcription of viral mRNAs occurs by a unique mechanism called cap-snatching. 5' methylated caps of cellular mRNAs are cleaved after 10-13 nucleotides by PA. In turn, these short capped RNAs are used as primers by PB1 for transcription of viral mRNAs. During virus replication, PB1 initiates RNA synthesis and copy vRNA into complementary RNA (cRNA) which in turn serves as a template for the production of more vRNAs.</text>
</comment>
<comment type="catalytic activity">
    <reaction evidence="1">
        <text>RNA(n) + a ribonucleoside 5'-triphosphate = RNA(n+1) + diphosphate</text>
        <dbReference type="Rhea" id="RHEA:21248"/>
        <dbReference type="Rhea" id="RHEA-COMP:14527"/>
        <dbReference type="Rhea" id="RHEA-COMP:17342"/>
        <dbReference type="ChEBI" id="CHEBI:33019"/>
        <dbReference type="ChEBI" id="CHEBI:61557"/>
        <dbReference type="ChEBI" id="CHEBI:140395"/>
        <dbReference type="EC" id="2.7.7.48"/>
    </reaction>
</comment>
<comment type="subunit">
    <text evidence="1">Influenza RNA polymerase is composed of three subunits: PB1, PB2 and PA. Interacts (via N-terminus) with PA (via C-terminus). Interacts (via C-terminus) with PB2 (via N-terminus); this interaction is essential for transcription initiation.</text>
</comment>
<comment type="subcellular location">
    <subcellularLocation>
        <location evidence="1">Host nucleus</location>
    </subcellularLocation>
    <subcellularLocation>
        <location evidence="1">Host cytoplasm</location>
    </subcellularLocation>
</comment>
<comment type="PTM">
    <text evidence="1">Phosphorylated by host PRKCA.</text>
</comment>
<comment type="similarity">
    <text evidence="1">Belongs to the influenza viruses polymerase PB1 family.</text>
</comment>